<name>ATPB_STAAE</name>
<dbReference type="EC" id="7.1.2.2" evidence="1"/>
<dbReference type="EMBL" id="AP009351">
    <property type="protein sequence ID" value="BAF68279.1"/>
    <property type="molecule type" value="Genomic_DNA"/>
</dbReference>
<dbReference type="RefSeq" id="WP_000511135.1">
    <property type="nucleotide sequence ID" value="NZ_JBBIAE010000008.1"/>
</dbReference>
<dbReference type="SMR" id="A6QIU7"/>
<dbReference type="GeneID" id="98346410"/>
<dbReference type="KEGG" id="sae:NWMN_2007"/>
<dbReference type="HOGENOM" id="CLU_022398_0_2_9"/>
<dbReference type="Proteomes" id="UP000006386">
    <property type="component" value="Chromosome"/>
</dbReference>
<dbReference type="GO" id="GO:0005886">
    <property type="term" value="C:plasma membrane"/>
    <property type="evidence" value="ECO:0007669"/>
    <property type="project" value="UniProtKB-SubCell"/>
</dbReference>
<dbReference type="GO" id="GO:0045259">
    <property type="term" value="C:proton-transporting ATP synthase complex"/>
    <property type="evidence" value="ECO:0007669"/>
    <property type="project" value="UniProtKB-KW"/>
</dbReference>
<dbReference type="GO" id="GO:0005524">
    <property type="term" value="F:ATP binding"/>
    <property type="evidence" value="ECO:0007669"/>
    <property type="project" value="UniProtKB-UniRule"/>
</dbReference>
<dbReference type="GO" id="GO:0016887">
    <property type="term" value="F:ATP hydrolysis activity"/>
    <property type="evidence" value="ECO:0007669"/>
    <property type="project" value="InterPro"/>
</dbReference>
<dbReference type="GO" id="GO:0046933">
    <property type="term" value="F:proton-transporting ATP synthase activity, rotational mechanism"/>
    <property type="evidence" value="ECO:0007669"/>
    <property type="project" value="UniProtKB-UniRule"/>
</dbReference>
<dbReference type="CDD" id="cd18110">
    <property type="entry name" value="ATP-synt_F1_beta_C"/>
    <property type="match status" value="1"/>
</dbReference>
<dbReference type="CDD" id="cd18115">
    <property type="entry name" value="ATP-synt_F1_beta_N"/>
    <property type="match status" value="1"/>
</dbReference>
<dbReference type="CDD" id="cd01133">
    <property type="entry name" value="F1-ATPase_beta_CD"/>
    <property type="match status" value="1"/>
</dbReference>
<dbReference type="FunFam" id="1.10.1140.10:FF:000001">
    <property type="entry name" value="ATP synthase subunit beta"/>
    <property type="match status" value="1"/>
</dbReference>
<dbReference type="FunFam" id="2.40.10.170:FF:000005">
    <property type="entry name" value="ATP synthase subunit beta"/>
    <property type="match status" value="1"/>
</dbReference>
<dbReference type="FunFam" id="3.40.50.300:FF:000004">
    <property type="entry name" value="ATP synthase subunit beta"/>
    <property type="match status" value="1"/>
</dbReference>
<dbReference type="Gene3D" id="2.40.10.170">
    <property type="match status" value="1"/>
</dbReference>
<dbReference type="Gene3D" id="1.10.1140.10">
    <property type="entry name" value="Bovine Mitochondrial F1-atpase, Atp Synthase Beta Chain, Chain D, domain 3"/>
    <property type="match status" value="1"/>
</dbReference>
<dbReference type="Gene3D" id="3.40.50.300">
    <property type="entry name" value="P-loop containing nucleotide triphosphate hydrolases"/>
    <property type="match status" value="1"/>
</dbReference>
<dbReference type="HAMAP" id="MF_01347">
    <property type="entry name" value="ATP_synth_beta_bact"/>
    <property type="match status" value="1"/>
</dbReference>
<dbReference type="InterPro" id="IPR003593">
    <property type="entry name" value="AAA+_ATPase"/>
</dbReference>
<dbReference type="InterPro" id="IPR055190">
    <property type="entry name" value="ATP-synt_VA_C"/>
</dbReference>
<dbReference type="InterPro" id="IPR005722">
    <property type="entry name" value="ATP_synth_F1_bsu"/>
</dbReference>
<dbReference type="InterPro" id="IPR020003">
    <property type="entry name" value="ATPase_a/bsu_AS"/>
</dbReference>
<dbReference type="InterPro" id="IPR050053">
    <property type="entry name" value="ATPase_alpha/beta_chains"/>
</dbReference>
<dbReference type="InterPro" id="IPR004100">
    <property type="entry name" value="ATPase_F1/V1/A1_a/bsu_N"/>
</dbReference>
<dbReference type="InterPro" id="IPR036121">
    <property type="entry name" value="ATPase_F1/V1/A1_a/bsu_N_sf"/>
</dbReference>
<dbReference type="InterPro" id="IPR000194">
    <property type="entry name" value="ATPase_F1/V1/A1_a/bsu_nucl-bd"/>
</dbReference>
<dbReference type="InterPro" id="IPR024034">
    <property type="entry name" value="ATPase_F1/V1_b/a_C"/>
</dbReference>
<dbReference type="InterPro" id="IPR027417">
    <property type="entry name" value="P-loop_NTPase"/>
</dbReference>
<dbReference type="NCBIfam" id="TIGR01039">
    <property type="entry name" value="atpD"/>
    <property type="match status" value="1"/>
</dbReference>
<dbReference type="PANTHER" id="PTHR15184">
    <property type="entry name" value="ATP SYNTHASE"/>
    <property type="match status" value="1"/>
</dbReference>
<dbReference type="PANTHER" id="PTHR15184:SF71">
    <property type="entry name" value="ATP SYNTHASE SUBUNIT BETA, MITOCHONDRIAL"/>
    <property type="match status" value="1"/>
</dbReference>
<dbReference type="Pfam" id="PF00006">
    <property type="entry name" value="ATP-synt_ab"/>
    <property type="match status" value="1"/>
</dbReference>
<dbReference type="Pfam" id="PF02874">
    <property type="entry name" value="ATP-synt_ab_N"/>
    <property type="match status" value="1"/>
</dbReference>
<dbReference type="Pfam" id="PF22919">
    <property type="entry name" value="ATP-synt_VA_C"/>
    <property type="match status" value="1"/>
</dbReference>
<dbReference type="SMART" id="SM00382">
    <property type="entry name" value="AAA"/>
    <property type="match status" value="1"/>
</dbReference>
<dbReference type="SUPFAM" id="SSF47917">
    <property type="entry name" value="C-terminal domain of alpha and beta subunits of F1 ATP synthase"/>
    <property type="match status" value="1"/>
</dbReference>
<dbReference type="SUPFAM" id="SSF50615">
    <property type="entry name" value="N-terminal domain of alpha and beta subunits of F1 ATP synthase"/>
    <property type="match status" value="1"/>
</dbReference>
<dbReference type="SUPFAM" id="SSF52540">
    <property type="entry name" value="P-loop containing nucleoside triphosphate hydrolases"/>
    <property type="match status" value="1"/>
</dbReference>
<dbReference type="PROSITE" id="PS00152">
    <property type="entry name" value="ATPASE_ALPHA_BETA"/>
    <property type="match status" value="1"/>
</dbReference>
<protein>
    <recommendedName>
        <fullName evidence="1">ATP synthase subunit beta</fullName>
        <ecNumber evidence="1">7.1.2.2</ecNumber>
    </recommendedName>
    <alternativeName>
        <fullName evidence="1">ATP synthase F1 sector subunit beta</fullName>
    </alternativeName>
    <alternativeName>
        <fullName evidence="1">F-ATPase subunit beta</fullName>
    </alternativeName>
</protein>
<reference key="1">
    <citation type="journal article" date="2008" name="J. Bacteriol.">
        <title>Genome sequence of Staphylococcus aureus strain Newman and comparative analysis of staphylococcal genomes: polymorphism and evolution of two major pathogenicity islands.</title>
        <authorList>
            <person name="Baba T."/>
            <person name="Bae T."/>
            <person name="Schneewind O."/>
            <person name="Takeuchi F."/>
            <person name="Hiramatsu K."/>
        </authorList>
    </citation>
    <scope>NUCLEOTIDE SEQUENCE [LARGE SCALE GENOMIC DNA]</scope>
    <source>
        <strain>Newman</strain>
    </source>
</reference>
<proteinExistence type="inferred from homology"/>
<accession>A6QIU7</accession>
<keyword id="KW-0066">ATP synthesis</keyword>
<keyword id="KW-0067">ATP-binding</keyword>
<keyword id="KW-1003">Cell membrane</keyword>
<keyword id="KW-0139">CF(1)</keyword>
<keyword id="KW-0375">Hydrogen ion transport</keyword>
<keyword id="KW-0406">Ion transport</keyword>
<keyword id="KW-0472">Membrane</keyword>
<keyword id="KW-0547">Nucleotide-binding</keyword>
<keyword id="KW-1278">Translocase</keyword>
<keyword id="KW-0813">Transport</keyword>
<sequence length="470" mass="51400">MGIGRVTQVMGPVIDVRFEHNEVPKINNALVIDVPKEEGTIQLTLEVALQLGDDVVRTIAMDSTDGVQRGMDVKDTGKEISVPVGDETLGRVFNVLGETIDLKEEISDSVRRDPIHRQAPAFDELSTEVQILETGIKVVDLLAPYIKGGKIGLFGGAGVGKTVLIQELINNIAQEHGGISVFAGVGERTREGNDLYFEMSDSGVIKKTAMVFGQMNEPPGARMRVALSGLTMAEYFRDEQGQDVLLFIDNIFRFTQAGSEVSALLGRMPSAVGYQPTLATEMGQLQERITSTTKGSVTSIQAVFVPADDYTDPAPATAFAHLDATTNLERKLTEMGIYPAVDPLASTSRALEPSIVGQEHYEVARDVQSTLQKYRELQDIIAILGMDELSDEDKQTVERARRIQFFLSQNFHVAEQFTGQKGSYVPVKTTVANFKDILDGKYDHIPEDAFRLVGSMDDVIAKAKDMGVEV</sequence>
<gene>
    <name evidence="1" type="primary">atpD</name>
    <name type="ordered locus">NWMN_2007</name>
</gene>
<comment type="function">
    <text evidence="1">Produces ATP from ADP in the presence of a proton gradient across the membrane. The catalytic sites are hosted primarily by the beta subunits.</text>
</comment>
<comment type="catalytic activity">
    <reaction evidence="1">
        <text>ATP + H2O + 4 H(+)(in) = ADP + phosphate + 5 H(+)(out)</text>
        <dbReference type="Rhea" id="RHEA:57720"/>
        <dbReference type="ChEBI" id="CHEBI:15377"/>
        <dbReference type="ChEBI" id="CHEBI:15378"/>
        <dbReference type="ChEBI" id="CHEBI:30616"/>
        <dbReference type="ChEBI" id="CHEBI:43474"/>
        <dbReference type="ChEBI" id="CHEBI:456216"/>
        <dbReference type="EC" id="7.1.2.2"/>
    </reaction>
</comment>
<comment type="subunit">
    <text evidence="1">F-type ATPases have 2 components, CF(1) - the catalytic core - and CF(0) - the membrane proton channel. CF(1) has five subunits: alpha(3), beta(3), gamma(1), delta(1), epsilon(1). CF(0) has three main subunits: a(1), b(2) and c(9-12). The alpha and beta chains form an alternating ring which encloses part of the gamma chain. CF(1) is attached to CF(0) by a central stalk formed by the gamma and epsilon chains, while a peripheral stalk is formed by the delta and b chains.</text>
</comment>
<comment type="subcellular location">
    <subcellularLocation>
        <location evidence="1">Cell membrane</location>
        <topology evidence="1">Peripheral membrane protein</topology>
    </subcellularLocation>
</comment>
<comment type="similarity">
    <text evidence="1">Belongs to the ATPase alpha/beta chains family.</text>
</comment>
<feature type="chain" id="PRO_1000073369" description="ATP synthase subunit beta">
    <location>
        <begin position="1"/>
        <end position="470"/>
    </location>
</feature>
<feature type="binding site" evidence="1">
    <location>
        <begin position="155"/>
        <end position="162"/>
    </location>
    <ligand>
        <name>ATP</name>
        <dbReference type="ChEBI" id="CHEBI:30616"/>
    </ligand>
</feature>
<organism>
    <name type="scientific">Staphylococcus aureus (strain Newman)</name>
    <dbReference type="NCBI Taxonomy" id="426430"/>
    <lineage>
        <taxon>Bacteria</taxon>
        <taxon>Bacillati</taxon>
        <taxon>Bacillota</taxon>
        <taxon>Bacilli</taxon>
        <taxon>Bacillales</taxon>
        <taxon>Staphylococcaceae</taxon>
        <taxon>Staphylococcus</taxon>
    </lineage>
</organism>
<evidence type="ECO:0000255" key="1">
    <source>
        <dbReference type="HAMAP-Rule" id="MF_01347"/>
    </source>
</evidence>